<gene>
    <name evidence="1" type="primary">ruvA</name>
    <name type="ordered locus">P9211_07021</name>
</gene>
<sequence length="223" mass="25293">MIGWLKGEKIDHWNNGNRAGFVLSCNGVGYEIQLSRRNLIALNNYNVLSIWIHQVLKEDGSNLFGFIEKSERDLFRKLITVSGVGPQLAMSLLDDNSYEQLIANVQNKEVTKLTRSSGVGKRTAERLILELQNKLSDFDLNNEFSPPTKLRPESAEDLNEELLTEIKSALRNLDYSDFEILEAVNTVTSNYLDDAASANERKLLLKSLNFEKLFKQALITLNK</sequence>
<protein>
    <recommendedName>
        <fullName evidence="1">Holliday junction branch migration complex subunit RuvA</fullName>
    </recommendedName>
</protein>
<dbReference type="EMBL" id="CP000878">
    <property type="protein sequence ID" value="ABX08633.1"/>
    <property type="molecule type" value="Genomic_DNA"/>
</dbReference>
<dbReference type="RefSeq" id="WP_012195255.1">
    <property type="nucleotide sequence ID" value="NC_009976.1"/>
</dbReference>
<dbReference type="SMR" id="A9B9X1"/>
<dbReference type="STRING" id="93059.P9211_07021"/>
<dbReference type="KEGG" id="pmj:P9211_07021"/>
<dbReference type="eggNOG" id="COG0632">
    <property type="taxonomic scope" value="Bacteria"/>
</dbReference>
<dbReference type="HOGENOM" id="CLU_087936_0_0_3"/>
<dbReference type="OrthoDB" id="5293449at2"/>
<dbReference type="Proteomes" id="UP000000788">
    <property type="component" value="Chromosome"/>
</dbReference>
<dbReference type="GO" id="GO:0005737">
    <property type="term" value="C:cytoplasm"/>
    <property type="evidence" value="ECO:0007669"/>
    <property type="project" value="UniProtKB-SubCell"/>
</dbReference>
<dbReference type="GO" id="GO:0048476">
    <property type="term" value="C:Holliday junction resolvase complex"/>
    <property type="evidence" value="ECO:0007669"/>
    <property type="project" value="UniProtKB-UniRule"/>
</dbReference>
<dbReference type="GO" id="GO:0005524">
    <property type="term" value="F:ATP binding"/>
    <property type="evidence" value="ECO:0007669"/>
    <property type="project" value="InterPro"/>
</dbReference>
<dbReference type="GO" id="GO:0000400">
    <property type="term" value="F:four-way junction DNA binding"/>
    <property type="evidence" value="ECO:0007669"/>
    <property type="project" value="UniProtKB-UniRule"/>
</dbReference>
<dbReference type="GO" id="GO:0009378">
    <property type="term" value="F:four-way junction helicase activity"/>
    <property type="evidence" value="ECO:0007669"/>
    <property type="project" value="InterPro"/>
</dbReference>
<dbReference type="GO" id="GO:0006310">
    <property type="term" value="P:DNA recombination"/>
    <property type="evidence" value="ECO:0007669"/>
    <property type="project" value="UniProtKB-UniRule"/>
</dbReference>
<dbReference type="GO" id="GO:0006281">
    <property type="term" value="P:DNA repair"/>
    <property type="evidence" value="ECO:0007669"/>
    <property type="project" value="UniProtKB-UniRule"/>
</dbReference>
<dbReference type="Gene3D" id="1.10.150.20">
    <property type="entry name" value="5' to 3' exonuclease, C-terminal subdomain"/>
    <property type="match status" value="1"/>
</dbReference>
<dbReference type="Gene3D" id="2.40.50.140">
    <property type="entry name" value="Nucleic acid-binding proteins"/>
    <property type="match status" value="1"/>
</dbReference>
<dbReference type="HAMAP" id="MF_00031">
    <property type="entry name" value="DNA_HJ_migration_RuvA"/>
    <property type="match status" value="1"/>
</dbReference>
<dbReference type="InterPro" id="IPR013849">
    <property type="entry name" value="DNA_helicase_Holl-junc_RuvA_I"/>
</dbReference>
<dbReference type="InterPro" id="IPR012340">
    <property type="entry name" value="NA-bd_OB-fold"/>
</dbReference>
<dbReference type="InterPro" id="IPR000085">
    <property type="entry name" value="RuvA"/>
</dbReference>
<dbReference type="InterPro" id="IPR010994">
    <property type="entry name" value="RuvA_2-like"/>
</dbReference>
<dbReference type="NCBIfam" id="TIGR00084">
    <property type="entry name" value="ruvA"/>
    <property type="match status" value="1"/>
</dbReference>
<dbReference type="Pfam" id="PF14520">
    <property type="entry name" value="HHH_5"/>
    <property type="match status" value="1"/>
</dbReference>
<dbReference type="Pfam" id="PF01330">
    <property type="entry name" value="RuvA_N"/>
    <property type="match status" value="1"/>
</dbReference>
<dbReference type="SUPFAM" id="SSF50249">
    <property type="entry name" value="Nucleic acid-binding proteins"/>
    <property type="match status" value="1"/>
</dbReference>
<dbReference type="SUPFAM" id="SSF47781">
    <property type="entry name" value="RuvA domain 2-like"/>
    <property type="match status" value="1"/>
</dbReference>
<proteinExistence type="inferred from homology"/>
<reference key="1">
    <citation type="journal article" date="2007" name="PLoS Genet.">
        <title>Patterns and implications of gene gain and loss in the evolution of Prochlorococcus.</title>
        <authorList>
            <person name="Kettler G.C."/>
            <person name="Martiny A.C."/>
            <person name="Huang K."/>
            <person name="Zucker J."/>
            <person name="Coleman M.L."/>
            <person name="Rodrigue S."/>
            <person name="Chen F."/>
            <person name="Lapidus A."/>
            <person name="Ferriera S."/>
            <person name="Johnson J."/>
            <person name="Steglich C."/>
            <person name="Church G.M."/>
            <person name="Richardson P."/>
            <person name="Chisholm S.W."/>
        </authorList>
    </citation>
    <scope>NUCLEOTIDE SEQUENCE [LARGE SCALE GENOMIC DNA]</scope>
    <source>
        <strain>MIT 9211</strain>
    </source>
</reference>
<evidence type="ECO:0000255" key="1">
    <source>
        <dbReference type="HAMAP-Rule" id="MF_00031"/>
    </source>
</evidence>
<feature type="chain" id="PRO_1000090353" description="Holliday junction branch migration complex subunit RuvA">
    <location>
        <begin position="1"/>
        <end position="223"/>
    </location>
</feature>
<feature type="region of interest" description="Domain I" evidence="1">
    <location>
        <begin position="1"/>
        <end position="67"/>
    </location>
</feature>
<feature type="region of interest" description="Domain II" evidence="1">
    <location>
        <begin position="68"/>
        <end position="146"/>
    </location>
</feature>
<feature type="region of interest" description="Flexible linker" evidence="1">
    <location>
        <begin position="147"/>
        <end position="157"/>
    </location>
</feature>
<feature type="region of interest" description="Domain III" evidence="1">
    <location>
        <begin position="158"/>
        <end position="223"/>
    </location>
</feature>
<accession>A9B9X1</accession>
<comment type="function">
    <text evidence="1">The RuvA-RuvB-RuvC complex processes Holliday junction (HJ) DNA during genetic recombination and DNA repair, while the RuvA-RuvB complex plays an important role in the rescue of blocked DNA replication forks via replication fork reversal (RFR). RuvA specifically binds to HJ cruciform DNA, conferring on it an open structure. The RuvB hexamer acts as an ATP-dependent pump, pulling dsDNA into and through the RuvAB complex. HJ branch migration allows RuvC to scan DNA until it finds its consensus sequence, where it cleaves and resolves the cruciform DNA.</text>
</comment>
<comment type="subunit">
    <text evidence="1">Homotetramer. Forms an RuvA(8)-RuvB(12)-Holliday junction (HJ) complex. HJ DNA is sandwiched between 2 RuvA tetramers; dsDNA enters through RuvA and exits via RuvB. An RuvB hexamer assembles on each DNA strand where it exits the tetramer. Each RuvB hexamer is contacted by two RuvA subunits (via domain III) on 2 adjacent RuvB subunits; this complex drives branch migration. In the full resolvosome a probable DNA-RuvA(4)-RuvB(12)-RuvC(2) complex forms which resolves the HJ.</text>
</comment>
<comment type="subcellular location">
    <subcellularLocation>
        <location evidence="1">Cytoplasm</location>
    </subcellularLocation>
</comment>
<comment type="domain">
    <text evidence="1">Has three domains with a flexible linker between the domains II and III and assumes an 'L' shape. Domain III is highly mobile and contacts RuvB.</text>
</comment>
<comment type="similarity">
    <text evidence="1">Belongs to the RuvA family.</text>
</comment>
<organism>
    <name type="scientific">Prochlorococcus marinus (strain MIT 9211)</name>
    <dbReference type="NCBI Taxonomy" id="93059"/>
    <lineage>
        <taxon>Bacteria</taxon>
        <taxon>Bacillati</taxon>
        <taxon>Cyanobacteriota</taxon>
        <taxon>Cyanophyceae</taxon>
        <taxon>Synechococcales</taxon>
        <taxon>Prochlorococcaceae</taxon>
        <taxon>Prochlorococcus</taxon>
    </lineage>
</organism>
<keyword id="KW-0963">Cytoplasm</keyword>
<keyword id="KW-0227">DNA damage</keyword>
<keyword id="KW-0233">DNA recombination</keyword>
<keyword id="KW-0234">DNA repair</keyword>
<keyword id="KW-0238">DNA-binding</keyword>
<keyword id="KW-1185">Reference proteome</keyword>
<name>RUVA_PROM4</name>